<feature type="chain" id="PRO_0000382739" description="MAU2 chromatid cohesion factor homolog">
    <location>
        <begin position="1"/>
        <end position="663"/>
    </location>
</feature>
<feature type="repeat" description="TPR 1">
    <location>
        <begin position="455"/>
        <end position="488"/>
    </location>
</feature>
<feature type="repeat" description="TPR 2">
    <location>
        <begin position="495"/>
        <end position="528"/>
    </location>
</feature>
<evidence type="ECO:0000250" key="1"/>
<evidence type="ECO:0000305" key="2"/>
<gene>
    <name type="ORF">GK13302</name>
</gene>
<comment type="function">
    <text evidence="1">Required for association of the cohesin complex with chromatin during interphase. Plays a role in sister chromatid cohesion and normal progression through prometaphase (By similarity).</text>
</comment>
<comment type="subunit">
    <text evidence="1">Interacts with Nipped-B to form the cohesin loading complex.</text>
</comment>
<comment type="subcellular location">
    <subcellularLocation>
        <location evidence="1">Nucleus</location>
        <location evidence="1">Nucleoplasm</location>
    </subcellularLocation>
    <text evidence="1">Binds to chromatin from the end of mitosis until prophase.</text>
</comment>
<comment type="similarity">
    <text evidence="2">Belongs to the SCC4/mau-2 family.</text>
</comment>
<comment type="sequence caution" evidence="2">
    <conflict type="frameshift">
        <sequence resource="EMBL-CDS" id="EDW84142"/>
    </conflict>
</comment>
<accession>B4NKT1</accession>
<proteinExistence type="inferred from homology"/>
<name>SCC4_DROWI</name>
<sequence length="663" mass="73979">MSGPSSANPAASQDACYISLLGLAEYFRTSQPPNIKKCIQCLQALFTFTPPSKVEARTHLQMGQILMAYTRNIDMARQHLEKAWNISESLMNFDDVKFDTASLLAQLHLQTEPSSNAAKAMLRRAVELSQNNVYWHCKLLLQLSQIHASDREYSSASELLAVGADSAEEAGATYLKVLFLLSRAMILMIERKTNDVLALLNSAGQIIDNNIPNPHQKEYLKVFFLVLQVCYYLALGQVKTVKPSLKQLQMSIQTIMAPNWPSDDTIFGSNQLEMFVWLPKEQLYVLVYLVTVSHSMMAGYMDKAQKYTEKALTQIEKLKLQEDKPILSVFKVILLEHIVMCRMVMGNRELAIREIAAARDVCLAAPQRRSLLKRHSAQLHCLIGLYAMSTSFFDHAERQFLVCVSETTERDLKLFANLNLAIIYLRTKRETDLKQILDAVSTENTHTYSSQALMGGFYYVQGLHAFHKNSFHEAKRFLRETLKMANAEDLNRLTSCSLVLLSHVFLSIGNSKESMNMVTPAMQLASKIPDIHVQLWGSAILKDLHRMSKDAQHEKEAYANHVKYSENLIADQRKCVQSSHHELVNWFHGDPPITTGAPLTLPVIPEAINNPVTPLTPSSAAVAATAGAAASTTPMTQTNVAVASTSALQPPVGAVAGQFGQFY</sequence>
<protein>
    <recommendedName>
        <fullName>MAU2 chromatid cohesion factor homolog</fullName>
    </recommendedName>
    <alternativeName>
        <fullName>Cohesin loading complex subunit SCC4 homolog</fullName>
    </alternativeName>
</protein>
<reference key="1">
    <citation type="journal article" date="2007" name="Nature">
        <title>Evolution of genes and genomes on the Drosophila phylogeny.</title>
        <authorList>
            <consortium name="Drosophila 12 genomes consortium"/>
        </authorList>
    </citation>
    <scope>NUCLEOTIDE SEQUENCE [LARGE SCALE GENOMIC DNA]</scope>
    <source>
        <strain>Tucson 14030-0811.24</strain>
    </source>
</reference>
<dbReference type="EMBL" id="CH964272">
    <property type="protein sequence ID" value="EDW84142.1"/>
    <property type="status" value="ALT_FRAME"/>
    <property type="molecule type" value="Genomic_DNA"/>
</dbReference>
<dbReference type="STRING" id="7260.B4NKT1"/>
<dbReference type="EnsemblMetazoa" id="FBtr0243953">
    <property type="protein sequence ID" value="FBpp0242445"/>
    <property type="gene ID" value="FBgn0215311"/>
</dbReference>
<dbReference type="EnsemblMetazoa" id="XM_002073120.4">
    <property type="protein sequence ID" value="XP_002073156.2"/>
    <property type="gene ID" value="LOC6650393"/>
</dbReference>
<dbReference type="GeneID" id="6650393"/>
<dbReference type="KEGG" id="dwi:6650393"/>
<dbReference type="CTD" id="23383"/>
<dbReference type="eggNOG" id="KOG2300">
    <property type="taxonomic scope" value="Eukaryota"/>
</dbReference>
<dbReference type="OrthoDB" id="5565328at2759"/>
<dbReference type="Proteomes" id="UP000007798">
    <property type="component" value="Unassembled WGS sequence"/>
</dbReference>
<dbReference type="GO" id="GO:0000785">
    <property type="term" value="C:chromatin"/>
    <property type="evidence" value="ECO:0000250"/>
    <property type="project" value="UniProtKB"/>
</dbReference>
<dbReference type="GO" id="GO:0005654">
    <property type="term" value="C:nucleoplasm"/>
    <property type="evidence" value="ECO:0000250"/>
    <property type="project" value="UniProtKB"/>
</dbReference>
<dbReference type="GO" id="GO:0005634">
    <property type="term" value="C:nucleus"/>
    <property type="evidence" value="ECO:0000250"/>
    <property type="project" value="UniProtKB"/>
</dbReference>
<dbReference type="GO" id="GO:0032116">
    <property type="term" value="C:SMC loading complex"/>
    <property type="evidence" value="ECO:0000250"/>
    <property type="project" value="UniProtKB"/>
</dbReference>
<dbReference type="GO" id="GO:0051301">
    <property type="term" value="P:cell division"/>
    <property type="evidence" value="ECO:0007669"/>
    <property type="project" value="UniProtKB-KW"/>
</dbReference>
<dbReference type="GO" id="GO:0007059">
    <property type="term" value="P:chromosome segregation"/>
    <property type="evidence" value="ECO:0007669"/>
    <property type="project" value="UniProtKB-KW"/>
</dbReference>
<dbReference type="GO" id="GO:0034088">
    <property type="term" value="P:maintenance of mitotic sister chromatid cohesion"/>
    <property type="evidence" value="ECO:0000250"/>
    <property type="project" value="UniProtKB"/>
</dbReference>
<dbReference type="FunFam" id="1.25.40.10:FF:000373">
    <property type="entry name" value="MAU2 chromatid cohesion factor homolog"/>
    <property type="match status" value="1"/>
</dbReference>
<dbReference type="FunFam" id="1.25.40.10:FF:000915">
    <property type="entry name" value="MAU2 chromatid cohesion factor homolog"/>
    <property type="match status" value="1"/>
</dbReference>
<dbReference type="Gene3D" id="1.25.40.10">
    <property type="entry name" value="Tetratricopeptide repeat domain"/>
    <property type="match status" value="2"/>
</dbReference>
<dbReference type="InterPro" id="IPR019440">
    <property type="entry name" value="MAU2"/>
</dbReference>
<dbReference type="InterPro" id="IPR011990">
    <property type="entry name" value="TPR-like_helical_dom_sf"/>
</dbReference>
<dbReference type="PANTHER" id="PTHR21394">
    <property type="entry name" value="MAU2 CHROMATID COHESION FACTOR HOMOLOG"/>
    <property type="match status" value="1"/>
</dbReference>
<dbReference type="Pfam" id="PF10345">
    <property type="entry name" value="Cohesin_load"/>
    <property type="match status" value="1"/>
</dbReference>
<organism>
    <name type="scientific">Drosophila willistoni</name>
    <name type="common">Fruit fly</name>
    <dbReference type="NCBI Taxonomy" id="7260"/>
    <lineage>
        <taxon>Eukaryota</taxon>
        <taxon>Metazoa</taxon>
        <taxon>Ecdysozoa</taxon>
        <taxon>Arthropoda</taxon>
        <taxon>Hexapoda</taxon>
        <taxon>Insecta</taxon>
        <taxon>Pterygota</taxon>
        <taxon>Neoptera</taxon>
        <taxon>Endopterygota</taxon>
        <taxon>Diptera</taxon>
        <taxon>Brachycera</taxon>
        <taxon>Muscomorpha</taxon>
        <taxon>Ephydroidea</taxon>
        <taxon>Drosophilidae</taxon>
        <taxon>Drosophila</taxon>
        <taxon>Sophophora</taxon>
    </lineage>
</organism>
<keyword id="KW-0131">Cell cycle</keyword>
<keyword id="KW-0132">Cell division</keyword>
<keyword id="KW-0159">Chromosome partition</keyword>
<keyword id="KW-0498">Mitosis</keyword>
<keyword id="KW-0539">Nucleus</keyword>
<keyword id="KW-1185">Reference proteome</keyword>
<keyword id="KW-0677">Repeat</keyword>
<keyword id="KW-0802">TPR repeat</keyword>